<evidence type="ECO:0000255" key="1"/>
<evidence type="ECO:0000269" key="2">
    <source>
    </source>
</evidence>
<evidence type="ECO:0000269" key="3">
    <source>
    </source>
</evidence>
<evidence type="ECO:0000269" key="4">
    <source>
    </source>
</evidence>
<evidence type="ECO:0000269" key="5">
    <source>
    </source>
</evidence>
<evidence type="ECO:0000269" key="6">
    <source>
    </source>
</evidence>
<evidence type="ECO:0000269" key="7">
    <source>
    </source>
</evidence>
<evidence type="ECO:0000269" key="8">
    <source>
    </source>
</evidence>
<evidence type="ECO:0000303" key="9">
    <source>
    </source>
</evidence>
<evidence type="ECO:0000303" key="10">
    <source>
    </source>
</evidence>
<evidence type="ECO:0000305" key="11"/>
<evidence type="ECO:0000305" key="12">
    <source>
    </source>
</evidence>
<proteinExistence type="evidence at protein level"/>
<reference key="1">
    <citation type="journal article" date="2007" name="J. Bacteriol.">
        <title>Identification and characterization of an RTX toxin in the emerging pathogen Kingella kingae.</title>
        <authorList>
            <person name="Kehl-Fie T.E."/>
            <person name="St Geme J.W. III"/>
        </authorList>
    </citation>
    <scope>NUCLEOTIDE SEQUENCE [GENOMIC RNA]</scope>
    <source>
        <strain>269-492</strain>
    </source>
</reference>
<reference key="2">
    <citation type="journal article" date="2011" name="J. Clin. Microbiol.">
        <title>The rtxA toxin gene of Kingella kingae: a pertinent target for molecular diagnosis of osteoarticular infections.</title>
        <authorList>
            <person name="Lehours P."/>
            <person name="Freydiere A.M."/>
            <person name="Richer O."/>
            <person name="Burucoa C."/>
            <person name="Boisset S."/>
            <person name="Lanotte P."/>
            <person name="Prere M.F."/>
            <person name="Ferroni A."/>
            <person name="Lafuente C."/>
            <person name="Vandenesch F."/>
            <person name="Megraud F."/>
            <person name="Menard A."/>
        </authorList>
    </citation>
    <scope>FUNCTION</scope>
</reference>
<reference key="3">
    <citation type="journal article" date="2011" name="Microb. Pathog.">
        <title>Cytotoxic effects of Kingella kingae outer membrane vesicles on human cells.</title>
        <authorList>
            <person name="Maldonado R."/>
            <person name="Wei R."/>
            <person name="Kachlany S.C."/>
            <person name="Kazi M."/>
            <person name="Balashova N.V."/>
        </authorList>
    </citation>
    <scope>SUBCELLULAR LOCATION</scope>
</reference>
<reference key="4">
    <citation type="journal article" date="2014" name="Infect. Immun.">
        <title>RTX toxin plays a key role in Kingella kingae virulence in an infant rat model.</title>
        <authorList>
            <person name="Chang D.W."/>
            <person name="Nudell Y.A."/>
            <person name="Lau J."/>
            <person name="Zakharian E."/>
            <person name="Balashova N.V."/>
        </authorList>
    </citation>
    <scope>FUNCTION</scope>
    <scope>DISRUPTION PHENOTYPE</scope>
</reference>
<reference key="5">
    <citation type="journal article" date="2015" name="Biochim. Biophys. Acta">
        <title>Pore forming activity of the potent RTX-toxin produced by pediatric pathogen Kingella kingae: Characterization and comparison to other RTX-family members.</title>
        <authorList>
            <person name="Barcena-Uribarri I."/>
            <person name="Benz R."/>
            <person name="Winterhalter M."/>
            <person name="Zakharian E."/>
            <person name="Balashova N."/>
        </authorList>
    </citation>
    <scope>FUNCTION</scope>
    <scope>SUBCELLULAR LOCATION</scope>
</reference>
<reference key="6">
    <citation type="journal article" date="2018" name="Emerg. Microbes Infect.">
        <title>Cytotoxic activity of Kingella kingae RtxA toxin depends on post-translational acylation of lysine residues and cholesterol binding.</title>
        <authorList>
            <person name="Osickova A."/>
            <person name="Balashova N."/>
            <person name="Masin J."/>
            <person name="Sulc M."/>
            <person name="Roderova J."/>
            <person name="Wald T."/>
            <person name="Brown A.C."/>
            <person name="Koufos E."/>
            <person name="Chang E.H."/>
            <person name="Giannakakis A."/>
            <person name="Lally E.T."/>
            <person name="Osicka R."/>
        </authorList>
    </citation>
    <scope>FUNCTION</scope>
    <scope>SUBCELLULAR LOCATION</scope>
    <scope>MYRISTOYLATION AT LYS-558 AND LYS-689</scope>
    <scope>MUTAGENESIS OF TYR-54; TYR-285; TYR-343; TYR-352 AND TYR-448</scope>
</reference>
<reference key="7">
    <citation type="journal article" date="2020" name="J. Biol. Chem.">
        <title>Acyltransferase-mediated selection of the length of the fatty acyl chain and of the acylation site governs activation of bacterial RTX toxins.</title>
        <authorList>
            <person name="Osickova A."/>
            <person name="Khaliq H."/>
            <person name="Masin J."/>
            <person name="Jurnecka D."/>
            <person name="Sukova A."/>
            <person name="Fiser R."/>
            <person name="Holubova J."/>
            <person name="Stanek O."/>
            <person name="Sebo P."/>
            <person name="Osicka R."/>
        </authorList>
    </citation>
    <scope>MYRISTOYLATION AT LYS-558 AND LYS-689</scope>
</reference>
<reference key="8">
    <citation type="journal article" date="2020" name="Int. J. Mol. Sci.">
        <title>Binding of Kingella kingae RtxA Toxin Depends on Cell Surface Oligosaccharides, but Not on beta2 Integrins.</title>
        <authorList>
            <person name="Rahman W.U."/>
            <person name="Osickova A."/>
            <person name="Klimova N."/>
            <person name="Lora J."/>
            <person name="Balashova N."/>
            <person name="Osicka R."/>
        </authorList>
    </citation>
    <scope>FUNCTION</scope>
    <scope>SUBCELLULAR LOCATION</scope>
</reference>
<protein>
    <recommendedName>
        <fullName evidence="11">Cytolysin RtxA</fullName>
    </recommendedName>
    <alternativeName>
        <fullName evidence="10">Repeats in toxin A</fullName>
    </alternativeName>
</protein>
<keyword id="KW-0204">Cytolysis</keyword>
<keyword id="KW-1032">Host cell membrane</keyword>
<keyword id="KW-1043">Host membrane</keyword>
<keyword id="KW-0449">Lipoprotein</keyword>
<keyword id="KW-0472">Membrane</keyword>
<keyword id="KW-0519">Myristate</keyword>
<keyword id="KW-0677">Repeat</keyword>
<keyword id="KW-0964">Secreted</keyword>
<keyword id="KW-0800">Toxin</keyword>
<keyword id="KW-0843">Virulence</keyword>
<feature type="chain" id="PRO_0000455664" description="Cytolysin RtxA">
    <location>
        <begin position="1"/>
        <end position="956"/>
    </location>
</feature>
<feature type="repeat" description="Hemolysin-type calcium-binding 1" evidence="1">
    <location>
        <begin position="613"/>
        <end position="639"/>
    </location>
</feature>
<feature type="repeat" description="Hemolysin-type calcium-binding 2" evidence="1">
    <location>
        <begin position="722"/>
        <end position="756"/>
    </location>
</feature>
<feature type="repeat" description="Hemolysin-type calcium-binding 3" evidence="1">
    <location>
        <begin position="757"/>
        <end position="791"/>
    </location>
</feature>
<feature type="region of interest" description="Cholesterol recognition/amino acid consensus (CRAC) region 1" evidence="12">
    <location>
        <begin position="48"/>
        <end position="58"/>
    </location>
</feature>
<feature type="region of interest" description="Cholesterol recognition/amino acid consensus (CARC) region 1" evidence="12">
    <location>
        <begin position="280"/>
        <end position="287"/>
    </location>
</feature>
<feature type="region of interest" description="Cholesterol recognition/amino acid consensus (CARC) region 2" evidence="12">
    <location>
        <begin position="340"/>
        <end position="348"/>
    </location>
</feature>
<feature type="region of interest" description="Cholesterol recognition/amino acid consensus (CRAC) region 2" evidence="12">
    <location>
        <begin position="349"/>
        <end position="354"/>
    </location>
</feature>
<feature type="region of interest" description="Cholesterol recognition/amino acid consensus (CARC) region 3" evidence="12">
    <location>
        <begin position="444"/>
        <end position="453"/>
    </location>
</feature>
<feature type="lipid moiety-binding region" description="N6-myristoyl lysine" evidence="6 7">
    <location>
        <position position="558"/>
    </location>
</feature>
<feature type="lipid moiety-binding region" description="N6-myristoyl lysine" evidence="6 7">
    <location>
        <position position="689"/>
    </location>
</feature>
<feature type="mutagenesis site" description="Does not affect cytolytic ability." evidence="6">
    <original>Y</original>
    <variation>F</variation>
    <location>
        <position position="54"/>
    </location>
</feature>
<feature type="mutagenesis site" description="Does not affect cytolytic ability." evidence="6">
    <original>Y</original>
    <variation>F</variation>
    <location>
        <position position="285"/>
    </location>
</feature>
<feature type="mutagenesis site" description="Reduced cytolytic ability." evidence="6">
    <original>Y</original>
    <variation>F</variation>
    <location>
        <position position="343"/>
    </location>
</feature>
<feature type="mutagenesis site" description="Reduced cytolytic ability." evidence="6">
    <original>Y</original>
    <variation>F</variation>
    <location>
        <position position="352"/>
    </location>
</feature>
<feature type="mutagenesis site" description="Does not affect cytolytic ability." evidence="6">
    <original>Y</original>
    <variation>F</variation>
    <location>
        <position position="448"/>
    </location>
</feature>
<organism>
    <name type="scientific">Kingella kingae</name>
    <dbReference type="NCBI Taxonomy" id="504"/>
    <lineage>
        <taxon>Bacteria</taxon>
        <taxon>Pseudomonadati</taxon>
        <taxon>Pseudomonadota</taxon>
        <taxon>Betaproteobacteria</taxon>
        <taxon>Neisseriales</taxon>
        <taxon>Neisseriaceae</taxon>
        <taxon>Kingella</taxon>
    </lineage>
</organism>
<comment type="function">
    <text evidence="2 4 5 6 8">Bacterial cytolysin that attacks host cell membranes and causes cell rupture by forming a pore (PubMed:25858109, PubMed:30405113). Binds and permeabilizes target cells by forming cation-selective pores (PubMed:25858109). Constitutes the key virulence cytotoxin of K.kingae (PubMed:21248099, PubMed:24664507). Binds cholesterol and oligosaccharides on the surface of host cells (PubMed:30405113). Does not bind beta-2 integrin (ITGB2) on the host cell surface (PubMed:33260488).</text>
</comment>
<comment type="subcellular location">
    <subcellularLocation>
        <location evidence="3">Secreted</location>
    </subcellularLocation>
    <subcellularLocation>
        <location evidence="5 6 8">Host cell membrane</location>
        <topology evidence="11">Multi-pass membrane protein</topology>
    </subcellularLocation>
</comment>
<comment type="PTM">
    <text evidence="6 7">Myristoylated by RtxC; the toxin only becomes active when modified (PubMed:30405113, PubMed:32461253). Mainly myristoylated; a very minor fraction is acylated with hydroxymyristoyl, lauroyl and palmitoleyl chains fatty acyl groups (PubMed:30405113). Fatty acylation is involved in binding to host membranes and promotes the irreversible insertion of RtxA into the host cell membrane (PubMed:30405113).</text>
</comment>
<comment type="disruption phenotype">
    <text evidence="4">Cells lacking RtxA display strongly reduced virulence.</text>
</comment>
<comment type="similarity">
    <text evidence="11">Belongs to the RTX prokaryotic toxin (TC 1.C.11) family.</text>
</comment>
<accession>A1YKW7</accession>
<name>RTXA_KINKI</name>
<gene>
    <name evidence="9" type="primary">rtxA</name>
</gene>
<sequence length="956" mass="101210">MNLATTKAKLKSGAQAGVQALNKAGHAAKTGTVAAGKATVAGAKSLYLTIPKDYDIEKGGSLNELIKAADELGIARLQEDANNIESAKKSIDTVEKLLSFTQTGVAVSAKKLDELLQKYSSSQLAKSLGSSANIDSKLTKTNHILSTLSSFLGTALAGMDLDSLVKQGDASATDLAKASLDLINELVNNISNSVQSIEAFSEQLGRLGAAISQTKGLSGLGNKLQNLPNFGKANLALEMISGLLSGISAGFTLADKNASTEKKVAAGFELSNQVIGNVTKAISSYVLAQRAAAGLSTTGAVASLITASIMLAISPLAFMNAADKFKNASLIDEFAKQFKKFGYDGDSLLAEYQRGAGTIEASLTAINTALGAVSAGVSAAAVGSVVGSPVALLVAGVTGLISGILEASKQAMFESVANRLQSKILAWEKENGGKNYFENGYDARHAHYLERNLKLLSELNKELQAERVIAITQQRWDANIGELAGITKLGDRISSGKAYADAFEDGKKLDGASNVTVDTRTGVVDISNANGKKTQALHFTSPLLTAGTETRERVQNGKYSYINQLKFNRVKSWTVKDGEANSRLDFSKVIQHVAFNDEDGRLSGKTEEIALNVNAGSGNDDIFAGQGKMNVDGGTGHDRVFYSKDGGLGQVNVDGTKATEAGSYTVNRSINNGSFYHEVIKRQTTQVGKRTETLEYRDFELKRPEHGYQTTDTLKSVEEIVGSQFSDTFKGSKFADIFHGGDGNDTLEGNDGDDRLFGGNGDDHLYGGNGDDLLDGGKGNDVINGGDGNDVYISRKGDGNDTLYDSHGSDKLAFADADLSELTIERTAQGIMIKRNDGSGSINMAEWYKTLSQQNYHGNATDDKIEQIIGKNGDYITSEQIDKLLKDKQTGTITSAQLQQLAQENKSKSIDSGNLASTLNKLIESMASFGSRGATASNYLQPAHKSPQNVLAPSAV</sequence>
<dbReference type="EMBL" id="EF067866">
    <property type="protein sequence ID" value="ABK58601.1"/>
    <property type="molecule type" value="Genomic_DNA"/>
</dbReference>
<dbReference type="RefSeq" id="WP_019388953.1">
    <property type="nucleotide sequence ID" value="NZ_LN869922.1"/>
</dbReference>
<dbReference type="SMR" id="A1YKW7"/>
<dbReference type="TCDB" id="1.C.11.1.8">
    <property type="family name" value="the pore-forming rtx toxin (rtx-toxin) family"/>
</dbReference>
<dbReference type="iPTMnet" id="A1YKW7"/>
<dbReference type="KEGG" id="kki:KKKWG1_0115"/>
<dbReference type="KEGG" id="kki:KKKWG1_0321"/>
<dbReference type="PHI-base" id="PHI:3596"/>
<dbReference type="GO" id="GO:0005576">
    <property type="term" value="C:extracellular region"/>
    <property type="evidence" value="ECO:0007669"/>
    <property type="project" value="UniProtKB-SubCell"/>
</dbReference>
<dbReference type="GO" id="GO:0033644">
    <property type="term" value="C:host cell membrane"/>
    <property type="evidence" value="ECO:0000314"/>
    <property type="project" value="UniProtKB"/>
</dbReference>
<dbReference type="GO" id="GO:0020002">
    <property type="term" value="C:host cell plasma membrane"/>
    <property type="evidence" value="ECO:0007669"/>
    <property type="project" value="UniProtKB-SubCell"/>
</dbReference>
<dbReference type="GO" id="GO:0016020">
    <property type="term" value="C:membrane"/>
    <property type="evidence" value="ECO:0007669"/>
    <property type="project" value="UniProtKB-KW"/>
</dbReference>
<dbReference type="GO" id="GO:0005509">
    <property type="term" value="F:calcium ion binding"/>
    <property type="evidence" value="ECO:0007669"/>
    <property type="project" value="InterPro"/>
</dbReference>
<dbReference type="GO" id="GO:0015485">
    <property type="term" value="F:cholesterol binding"/>
    <property type="evidence" value="ECO:0000314"/>
    <property type="project" value="UniProtKB"/>
</dbReference>
<dbReference type="GO" id="GO:0005261">
    <property type="term" value="F:monoatomic cation channel activity"/>
    <property type="evidence" value="ECO:0000314"/>
    <property type="project" value="UniProtKB"/>
</dbReference>
<dbReference type="GO" id="GO:0140911">
    <property type="term" value="F:pore-forming activity"/>
    <property type="evidence" value="ECO:0000314"/>
    <property type="project" value="UniProtKB"/>
</dbReference>
<dbReference type="GO" id="GO:0090729">
    <property type="term" value="F:toxin activity"/>
    <property type="evidence" value="ECO:0000315"/>
    <property type="project" value="UniProtKB"/>
</dbReference>
<dbReference type="GO" id="GO:0031640">
    <property type="term" value="P:killing of cells of another organism"/>
    <property type="evidence" value="ECO:0007669"/>
    <property type="project" value="UniProtKB-KW"/>
</dbReference>
<dbReference type="Gene3D" id="2.150.10.10">
    <property type="entry name" value="Serralysin-like metalloprotease, C-terminal"/>
    <property type="match status" value="1"/>
</dbReference>
<dbReference type="InterPro" id="IPR018511">
    <property type="entry name" value="Hemolysin-typ_Ca-bd_CS"/>
</dbReference>
<dbReference type="InterPro" id="IPR001343">
    <property type="entry name" value="Hemolysn_Ca-bd"/>
</dbReference>
<dbReference type="InterPro" id="IPR013550">
    <property type="entry name" value="RTX_C"/>
</dbReference>
<dbReference type="InterPro" id="IPR018504">
    <property type="entry name" value="RTX_pore_form"/>
</dbReference>
<dbReference type="InterPro" id="IPR050557">
    <property type="entry name" value="RTX_toxin/Mannuronan_C5-epim"/>
</dbReference>
<dbReference type="InterPro" id="IPR003995">
    <property type="entry name" value="RTX_toxin_determinant-A"/>
</dbReference>
<dbReference type="InterPro" id="IPR011049">
    <property type="entry name" value="Serralysin-like_metalloprot_C"/>
</dbReference>
<dbReference type="NCBIfam" id="NF033943">
    <property type="entry name" value="RTX_toxin"/>
    <property type="match status" value="1"/>
</dbReference>
<dbReference type="PANTHER" id="PTHR38340">
    <property type="entry name" value="S-LAYER PROTEIN"/>
    <property type="match status" value="1"/>
</dbReference>
<dbReference type="PANTHER" id="PTHR38340:SF1">
    <property type="entry name" value="S-LAYER PROTEIN"/>
    <property type="match status" value="1"/>
</dbReference>
<dbReference type="Pfam" id="PF00353">
    <property type="entry name" value="HemolysinCabind"/>
    <property type="match status" value="3"/>
</dbReference>
<dbReference type="Pfam" id="PF02382">
    <property type="entry name" value="RTX"/>
    <property type="match status" value="1"/>
</dbReference>
<dbReference type="Pfam" id="PF08339">
    <property type="entry name" value="RTX_C"/>
    <property type="match status" value="1"/>
</dbReference>
<dbReference type="PRINTS" id="PR00313">
    <property type="entry name" value="CABNDNGRPT"/>
</dbReference>
<dbReference type="PRINTS" id="PR01488">
    <property type="entry name" value="RTXTOXINA"/>
</dbReference>
<dbReference type="SUPFAM" id="SSF51120">
    <property type="entry name" value="beta-Roll"/>
    <property type="match status" value="1"/>
</dbReference>
<dbReference type="PROSITE" id="PS00330">
    <property type="entry name" value="HEMOLYSIN_CALCIUM"/>
    <property type="match status" value="4"/>
</dbReference>